<dbReference type="EMBL" id="Z81082">
    <property type="protein sequence ID" value="CAB03095.2"/>
    <property type="molecule type" value="Genomic_DNA"/>
</dbReference>
<dbReference type="EMBL" id="Z81082">
    <property type="protein sequence ID" value="CAB03096.2"/>
    <property type="molecule type" value="Genomic_DNA"/>
</dbReference>
<dbReference type="EMBL" id="Z81082">
    <property type="protein sequence ID" value="CCE71325.1"/>
    <property type="molecule type" value="Genomic_DNA"/>
</dbReference>
<dbReference type="EMBL" id="Z81082">
    <property type="protein sequence ID" value="CCE71326.1"/>
    <property type="molecule type" value="Genomic_DNA"/>
</dbReference>
<dbReference type="EMBL" id="Z81082">
    <property type="protein sequence ID" value="CCE71327.1"/>
    <property type="molecule type" value="Genomic_DNA"/>
</dbReference>
<dbReference type="PIR" id="C88346">
    <property type="entry name" value="C88346"/>
</dbReference>
<dbReference type="PIR" id="T22111">
    <property type="entry name" value="T22111"/>
</dbReference>
<dbReference type="RefSeq" id="NP_001254364.1">
    <molecule id="Q9U3F4-5"/>
    <property type="nucleotide sequence ID" value="NM_001267435.4"/>
</dbReference>
<dbReference type="RefSeq" id="NP_001254365.1">
    <molecule id="Q9U3F4-3"/>
    <property type="nucleotide sequence ID" value="NM_001267436.3"/>
</dbReference>
<dbReference type="RefSeq" id="NP_001254366.1">
    <molecule id="Q9U3F4-4"/>
    <property type="nucleotide sequence ID" value="NM_001267437.3"/>
</dbReference>
<dbReference type="RefSeq" id="NP_496776.1">
    <molecule id="Q9U3F4-1"/>
    <property type="nucleotide sequence ID" value="NM_064375.10"/>
</dbReference>
<dbReference type="RefSeq" id="NP_496777.2">
    <molecule id="Q9U3F4-2"/>
    <property type="nucleotide sequence ID" value="NM_064376.6"/>
</dbReference>
<dbReference type="SMR" id="Q9U3F4"/>
<dbReference type="DIP" id="DIP-25080N"/>
<dbReference type="FunCoup" id="Q9U3F4">
    <property type="interactions" value="3"/>
</dbReference>
<dbReference type="IntAct" id="Q9U3F4">
    <property type="interactions" value="11"/>
</dbReference>
<dbReference type="STRING" id="6239.F42G4.3e.2"/>
<dbReference type="PaxDb" id="6239-F42G4.3e.2"/>
<dbReference type="PeptideAtlas" id="Q9U3F4"/>
<dbReference type="EnsemblMetazoa" id="F42G4.3a.1">
    <molecule id="Q9U3F4-1"/>
    <property type="protein sequence ID" value="F42G4.3a.1"/>
    <property type="gene ID" value="WBGene00006999"/>
</dbReference>
<dbReference type="EnsemblMetazoa" id="F42G4.3a.2">
    <molecule id="Q9U3F4-1"/>
    <property type="protein sequence ID" value="F42G4.3a.2"/>
    <property type="gene ID" value="WBGene00006999"/>
</dbReference>
<dbReference type="EnsemblMetazoa" id="F42G4.3b.1">
    <molecule id="Q9U3F4-2"/>
    <property type="protein sequence ID" value="F42G4.3b.1"/>
    <property type="gene ID" value="WBGene00006999"/>
</dbReference>
<dbReference type="EnsemblMetazoa" id="F42G4.3c.1">
    <molecule id="Q9U3F4-3"/>
    <property type="protein sequence ID" value="F42G4.3c.1"/>
    <property type="gene ID" value="WBGene00006999"/>
</dbReference>
<dbReference type="EnsemblMetazoa" id="F42G4.3d.1">
    <molecule id="Q9U3F4-4"/>
    <property type="protein sequence ID" value="F42G4.3d.1"/>
    <property type="gene ID" value="WBGene00006999"/>
</dbReference>
<dbReference type="EnsemblMetazoa" id="F42G4.3e.1">
    <molecule id="Q9U3F4-5"/>
    <property type="protein sequence ID" value="F42G4.3e.1"/>
    <property type="gene ID" value="WBGene00006999"/>
</dbReference>
<dbReference type="GeneID" id="174951"/>
<dbReference type="KEGG" id="cel:CELE_F42G4.3"/>
<dbReference type="UCSC" id="F42G4.3a.1">
    <property type="organism name" value="c. elegans"/>
</dbReference>
<dbReference type="AGR" id="WB:WBGene00006999"/>
<dbReference type="CTD" id="174951"/>
<dbReference type="WormBase" id="F42G4.3a">
    <molecule id="Q9U3F4-1"/>
    <property type="protein sequence ID" value="CE23716"/>
    <property type="gene ID" value="WBGene00006999"/>
    <property type="gene designation" value="zyx-1"/>
</dbReference>
<dbReference type="WormBase" id="F42G4.3b">
    <molecule id="Q9U3F4-2"/>
    <property type="protein sequence ID" value="CE46653"/>
    <property type="gene ID" value="WBGene00006999"/>
    <property type="gene designation" value="zyx-1"/>
</dbReference>
<dbReference type="WormBase" id="F42G4.3c">
    <molecule id="Q9U3F4-3"/>
    <property type="protein sequence ID" value="CE46595"/>
    <property type="gene ID" value="WBGene00006999"/>
    <property type="gene designation" value="zyx-1"/>
</dbReference>
<dbReference type="WormBase" id="F42G4.3d">
    <molecule id="Q9U3F4-4"/>
    <property type="protein sequence ID" value="CE10324"/>
    <property type="gene ID" value="WBGene00006999"/>
    <property type="gene designation" value="zyx-1"/>
</dbReference>
<dbReference type="WormBase" id="F42G4.3e">
    <molecule id="Q9U3F4-5"/>
    <property type="protein sequence ID" value="CE46698"/>
    <property type="gene ID" value="WBGene00006999"/>
    <property type="gene designation" value="zyx-1"/>
</dbReference>
<dbReference type="eggNOG" id="KOG1701">
    <property type="taxonomic scope" value="Eukaryota"/>
</dbReference>
<dbReference type="GeneTree" id="ENSGT00940000168198"/>
<dbReference type="HOGENOM" id="CLU_452874_0_0_1"/>
<dbReference type="InParanoid" id="Q9U3F4"/>
<dbReference type="OMA" id="RCEDCNM"/>
<dbReference type="OrthoDB" id="25414at2759"/>
<dbReference type="PhylomeDB" id="Q9U3F4"/>
<dbReference type="Reactome" id="R-CEL-446353">
    <property type="pathway name" value="Cell-extracellular matrix interactions"/>
</dbReference>
<dbReference type="SignaLink" id="Q9U3F4"/>
<dbReference type="PRO" id="PR:Q9U3F4"/>
<dbReference type="Proteomes" id="UP000001940">
    <property type="component" value="Chromosome II"/>
</dbReference>
<dbReference type="Bgee" id="WBGene00006999">
    <property type="expression patterns" value="Expressed in larva and 3 other cell types or tissues"/>
</dbReference>
<dbReference type="GO" id="GO:0015629">
    <property type="term" value="C:actin cytoskeleton"/>
    <property type="evidence" value="ECO:0000250"/>
    <property type="project" value="WormBase"/>
</dbReference>
<dbReference type="GO" id="GO:0030424">
    <property type="term" value="C:axon"/>
    <property type="evidence" value="ECO:0007669"/>
    <property type="project" value="UniProtKB-SubCell"/>
</dbReference>
<dbReference type="GO" id="GO:0005925">
    <property type="term" value="C:focal adhesion"/>
    <property type="evidence" value="ECO:0000250"/>
    <property type="project" value="WormBase"/>
</dbReference>
<dbReference type="GO" id="GO:0031430">
    <property type="term" value="C:M band"/>
    <property type="evidence" value="ECO:0000314"/>
    <property type="project" value="WormBase"/>
</dbReference>
<dbReference type="GO" id="GO:0005634">
    <property type="term" value="C:nucleus"/>
    <property type="evidence" value="ECO:0000314"/>
    <property type="project" value="WormBase"/>
</dbReference>
<dbReference type="GO" id="GO:0001725">
    <property type="term" value="C:stress fiber"/>
    <property type="evidence" value="ECO:0000318"/>
    <property type="project" value="GO_Central"/>
</dbReference>
<dbReference type="GO" id="GO:0055120">
    <property type="term" value="C:striated muscle dense body"/>
    <property type="evidence" value="ECO:0000314"/>
    <property type="project" value="WormBase"/>
</dbReference>
<dbReference type="GO" id="GO:0017151">
    <property type="term" value="F:DEAD/H-box RNA helicase binding"/>
    <property type="evidence" value="ECO:0000353"/>
    <property type="project" value="WormBase"/>
</dbReference>
<dbReference type="GO" id="GO:0046872">
    <property type="term" value="F:metal ion binding"/>
    <property type="evidence" value="ECO:0007669"/>
    <property type="project" value="UniProtKB-KW"/>
</dbReference>
<dbReference type="GO" id="GO:0098609">
    <property type="term" value="P:cell-cell adhesion"/>
    <property type="evidence" value="ECO:0000318"/>
    <property type="project" value="GO_Central"/>
</dbReference>
<dbReference type="GO" id="GO:0099558">
    <property type="term" value="P:maintenance of synapse structure"/>
    <property type="evidence" value="ECO:0000315"/>
    <property type="project" value="WormBase"/>
</dbReference>
<dbReference type="GO" id="GO:0007399">
    <property type="term" value="P:nervous system development"/>
    <property type="evidence" value="ECO:0007669"/>
    <property type="project" value="UniProtKB-KW"/>
</dbReference>
<dbReference type="GO" id="GO:0006939">
    <property type="term" value="P:smooth muscle contraction"/>
    <property type="evidence" value="ECO:0000315"/>
    <property type="project" value="WormBase"/>
</dbReference>
<dbReference type="CDD" id="cd09357">
    <property type="entry name" value="LIM3_Zyxin_like"/>
    <property type="match status" value="1"/>
</dbReference>
<dbReference type="FunFam" id="2.10.110.10:FF:000139">
    <property type="entry name" value="Protein CBR-ZYX-1"/>
    <property type="match status" value="1"/>
</dbReference>
<dbReference type="Gene3D" id="2.10.110.10">
    <property type="entry name" value="Cysteine Rich Protein"/>
    <property type="match status" value="3"/>
</dbReference>
<dbReference type="InterPro" id="IPR001781">
    <property type="entry name" value="Znf_LIM"/>
</dbReference>
<dbReference type="PANTHER" id="PTHR24207">
    <property type="entry name" value="ZYX102 PROTEIN"/>
    <property type="match status" value="1"/>
</dbReference>
<dbReference type="PANTHER" id="PTHR24207:SF2">
    <property type="entry name" value="ZYX102 PROTEIN"/>
    <property type="match status" value="1"/>
</dbReference>
<dbReference type="Pfam" id="PF00412">
    <property type="entry name" value="LIM"/>
    <property type="match status" value="3"/>
</dbReference>
<dbReference type="SMART" id="SM00132">
    <property type="entry name" value="LIM"/>
    <property type="match status" value="3"/>
</dbReference>
<dbReference type="SUPFAM" id="SSF57716">
    <property type="entry name" value="Glucocorticoid receptor-like (DNA-binding domain)"/>
    <property type="match status" value="3"/>
</dbReference>
<dbReference type="PROSITE" id="PS00478">
    <property type="entry name" value="LIM_DOMAIN_1"/>
    <property type="match status" value="2"/>
</dbReference>
<dbReference type="PROSITE" id="PS50023">
    <property type="entry name" value="LIM_DOMAIN_2"/>
    <property type="match status" value="3"/>
</dbReference>
<evidence type="ECO:0000255" key="1">
    <source>
        <dbReference type="PROSITE-ProRule" id="PRU00125"/>
    </source>
</evidence>
<evidence type="ECO:0000256" key="2">
    <source>
        <dbReference type="SAM" id="MobiDB-lite"/>
    </source>
</evidence>
<evidence type="ECO:0000269" key="3">
    <source>
    </source>
</evidence>
<evidence type="ECO:0000269" key="4">
    <source>
    </source>
</evidence>
<evidence type="ECO:0000269" key="5">
    <source>
    </source>
</evidence>
<evidence type="ECO:0000269" key="6">
    <source>
    </source>
</evidence>
<evidence type="ECO:0000303" key="7">
    <source>
    </source>
</evidence>
<evidence type="ECO:0000303" key="8">
    <source>
    </source>
</evidence>
<evidence type="ECO:0000303" key="9">
    <source>
    </source>
</evidence>
<evidence type="ECO:0000305" key="10"/>
<evidence type="ECO:0000312" key="11">
    <source>
        <dbReference type="Proteomes" id="UP000001940"/>
    </source>
</evidence>
<evidence type="ECO:0000312" key="12">
    <source>
        <dbReference type="WormBase" id="F42G4.3a"/>
    </source>
</evidence>
<evidence type="ECO:0000312" key="13">
    <source>
        <dbReference type="WormBase" id="F42G4.3b"/>
    </source>
</evidence>
<evidence type="ECO:0000312" key="14">
    <source>
        <dbReference type="WormBase" id="F42G4.3c"/>
    </source>
</evidence>
<evidence type="ECO:0000312" key="15">
    <source>
        <dbReference type="WormBase" id="F42G4.3d"/>
    </source>
</evidence>
<evidence type="ECO:0000312" key="16">
    <source>
        <dbReference type="WormBase" id="F42G4.3e"/>
    </source>
</evidence>
<feature type="chain" id="PRO_0000432626" description="Zyxin">
    <location>
        <begin position="1"/>
        <end position="603"/>
    </location>
</feature>
<feature type="domain" description="LIM zinc-binding 1" evidence="1">
    <location>
        <begin position="409"/>
        <end position="470"/>
    </location>
</feature>
<feature type="domain" description="LIM zinc-binding 2" evidence="1">
    <location>
        <begin position="471"/>
        <end position="529"/>
    </location>
</feature>
<feature type="domain" description="LIM zinc-binding 3" evidence="1">
    <location>
        <begin position="530"/>
        <end position="601"/>
    </location>
</feature>
<feature type="region of interest" description="Disordered" evidence="2">
    <location>
        <begin position="1"/>
        <end position="131"/>
    </location>
</feature>
<feature type="region of interest" description="Disordered" evidence="2">
    <location>
        <begin position="166"/>
        <end position="193"/>
    </location>
</feature>
<feature type="region of interest" description="Disordered" evidence="2">
    <location>
        <begin position="218"/>
        <end position="237"/>
    </location>
</feature>
<feature type="region of interest" description="Disordered" evidence="2">
    <location>
        <begin position="310"/>
        <end position="333"/>
    </location>
</feature>
<feature type="region of interest" description="Disordered" evidence="2">
    <location>
        <begin position="363"/>
        <end position="395"/>
    </location>
</feature>
<feature type="compositionally biased region" description="Pro residues" evidence="2">
    <location>
        <begin position="1"/>
        <end position="13"/>
    </location>
</feature>
<feature type="compositionally biased region" description="Basic and acidic residues" evidence="2">
    <location>
        <begin position="69"/>
        <end position="95"/>
    </location>
</feature>
<feature type="compositionally biased region" description="Polar residues" evidence="2">
    <location>
        <begin position="184"/>
        <end position="193"/>
    </location>
</feature>
<feature type="compositionally biased region" description="Low complexity" evidence="2">
    <location>
        <begin position="218"/>
        <end position="234"/>
    </location>
</feature>
<feature type="compositionally biased region" description="Polar residues" evidence="2">
    <location>
        <begin position="315"/>
        <end position="333"/>
    </location>
</feature>
<feature type="compositionally biased region" description="Polar residues" evidence="2">
    <location>
        <begin position="363"/>
        <end position="373"/>
    </location>
</feature>
<feature type="compositionally biased region" description="Polar residues" evidence="2">
    <location>
        <begin position="382"/>
        <end position="391"/>
    </location>
</feature>
<feature type="splice variant" id="VSP_057539" description="In isoform b.">
    <original>MGPPPPPPPPPLLPSGEILPSRKWKTEDAPRRNNHPAPAPPKPSRPTVDASALQHAAARLRKTGYNEPVRGDVENLSDGRLDRPHQQLPDGDRTYRANLQQLAQPKTRAEIPSPPTYSNQPRPLGDFHRDPNALSQFQQSREALLSSTSPTSNYSPINKFSSSTLTQYANKSPSPPSFGNSNSEATYVSPYSSKHSYPTNFRSYHKDDDYFNNTATTATTTTSSNSLNENNNSNKYGNKETVLQWSEPYDPSKIRRSQSPIRNAREMIHEYSTTNYVTEVQQPPPPPPDLYQRMTQARTFLQNSLAKQLRDEGLTESQKAANRNQTGALSASSSIPFDASQIVKNSYNGDEVDHLVHQMRTKLNQPADTSPSIVQYPRRQAPDSSRANYSATTSTSFSSSTTRKIMNIN</original>
    <variation>MADQED</variation>
    <location>
        <begin position="1"/>
        <end position="409"/>
    </location>
</feature>
<feature type="splice variant" id="VSP_057540" description="In isoform d.">
    <location>
        <begin position="1"/>
        <end position="358"/>
    </location>
</feature>
<feature type="splice variant" id="VSP_057541" description="In isoform c.">
    <location>
        <begin position="1"/>
        <end position="266"/>
    </location>
</feature>
<feature type="splice variant" id="VSP_057542" description="In isoform e.">
    <original>LEGQGCYPIDNHLLCKTCNGNRLRVVSST</original>
    <variation>KECEFTKCKWFFEYGCQPPDDLDINGGHLELCSGALFIRHLCCKFHKNQRYLGRHVEHNPKQFEFIPSLARLQ</variation>
    <location>
        <begin position="575"/>
        <end position="603"/>
    </location>
</feature>
<name>ZYX_CAEEL</name>
<comment type="function">
    <text evidence="5 6">Functions both as a mechanical stabilizer (via LIM domains) of focal adhesions, and as a sensor component for muscle cell damage (via N-terminus) (PubMed:23427270). Regulates, stabilizes and maintains posterior lateral mechanosensory (PLM) synaptic branch extension and new synapse formation and growth during larval development (PubMed:25252943).</text>
</comment>
<comment type="subunit">
    <text evidence="3 4 5">Interacts with dyc-1 (PubMed:18094057, PubMed:23427270). Interacts with glh-1 and glh-3 (PubMed:12435362).</text>
</comment>
<comment type="interaction">
    <interactant intactId="EBI-322208">
        <id>Q9U3F4</id>
    </interactant>
    <interactant intactId="EBI-1571750">
        <id>O01836</id>
        <label>glh-3</label>
    </interactant>
    <organismsDiffer>false</organismsDiffer>
    <experiments>2</experiments>
</comment>
<comment type="subcellular location">
    <subcellularLocation>
        <location evidence="4 5 6">Nucleus</location>
    </subcellularLocation>
    <subcellularLocation>
        <location evidence="6">Cytoplasm</location>
    </subcellularLocation>
    <subcellularLocation>
        <location evidence="4 5">Cytoplasm</location>
        <location evidence="4 5">Myofibril</location>
        <location evidence="4 5">Sarcomere</location>
        <location evidence="4 5">M line</location>
    </subcellularLocation>
    <subcellularLocation>
        <location evidence="5">Cell projection</location>
        <location evidence="5">Axon</location>
    </subcellularLocation>
    <subcellularLocation>
        <location evidence="5">Cell junction</location>
        <location evidence="5">Focal adhesion</location>
    </subcellularLocation>
    <subcellularLocation>
        <location evidence="5">Cytoplasm</location>
        <location evidence="5">Cytoskeleton</location>
    </subcellularLocation>
    <text evidence="4 5">Shuttles between dense bodies and M lines (PubMed:18094057, PubMed:23427270). Localizes to nucleus in body wall muscle cells. Highly mobile in cytoplasm. Mobility seems to depend on atn-1 (PubMed:23427270).</text>
</comment>
<comment type="alternative products">
    <event type="alternative promoter"/>
    <event type="alternative splicing"/>
    <isoform>
        <id>Q9U3F4-1</id>
        <name evidence="12">a</name>
        <name evidence="7">ZYX-1A</name>
        <sequence type="displayed"/>
    </isoform>
    <isoform>
        <id>Q9U3F4-2</id>
        <name evidence="13">b</name>
        <name evidence="8">ZYX-1B</name>
        <sequence type="described" ref="VSP_057539"/>
    </isoform>
    <isoform>
        <id>Q9U3F4-3</id>
        <name evidence="14">c</name>
        <sequence type="described" ref="VSP_057541"/>
    </isoform>
    <isoform>
        <id>Q9U3F4-4</id>
        <name evidence="15">d</name>
        <sequence type="described" ref="VSP_057540"/>
    </isoform>
    <isoform>
        <id>Q9U3F4-5</id>
        <name evidence="16">e</name>
        <sequence type="described" ref="VSP_057542"/>
    </isoform>
</comment>
<comment type="tissue specificity">
    <text evidence="4 5 6">Expressed in neurons and body wall muscle (PubMed:18094057, PubMed:23427270, PubMed:25252943). Expressed in pharyngeal, enteric and uterine muscles and in spermatheca (PubMed:25252943).</text>
</comment>
<comment type="developmental stage">
    <text evidence="6">Expressed in neurons and muscle throughout development.</text>
</comment>
<comment type="domain">
    <text evidence="6">The LIM domains are sufficient for the role in PLM synaptogenesis.</text>
</comment>
<comment type="disruption phenotype">
    <text evidence="5">RNAi-mediated knock-down of isoform a in a dys-1/hlh-1 double mutant background reduces muscle degeneration.</text>
</comment>
<comment type="miscellaneous">
    <molecule>Isoform b</molecule>
    <text evidence="9">Produced by alternative promoter usage.</text>
</comment>
<comment type="miscellaneous">
    <molecule>Isoform c</molecule>
    <text evidence="10">Produced by alternative promoter usage.</text>
</comment>
<comment type="miscellaneous">
    <molecule>Isoform d</molecule>
    <text evidence="10">Produced by alternative promoter usage.</text>
</comment>
<comment type="miscellaneous">
    <molecule>Isoform e</molecule>
    <text evidence="10">Produced by alternative splicing of isoform a.</text>
</comment>
<comment type="similarity">
    <text evidence="10">Belongs to the zyxin/ajuba family.</text>
</comment>
<gene>
    <name evidence="12" type="primary">zyx-1</name>
    <name evidence="12" type="ORF">F42G4.3</name>
</gene>
<keyword id="KW-0877">Alternative promoter usage</keyword>
<keyword id="KW-0025">Alternative splicing</keyword>
<keyword id="KW-0130">Cell adhesion</keyword>
<keyword id="KW-0965">Cell junction</keyword>
<keyword id="KW-0966">Cell projection</keyword>
<keyword id="KW-0963">Cytoplasm</keyword>
<keyword id="KW-0206">Cytoskeleton</keyword>
<keyword id="KW-0440">LIM domain</keyword>
<keyword id="KW-0479">Metal-binding</keyword>
<keyword id="KW-0524">Neurogenesis</keyword>
<keyword id="KW-0539">Nucleus</keyword>
<keyword id="KW-1185">Reference proteome</keyword>
<keyword id="KW-0677">Repeat</keyword>
<keyword id="KW-0862">Zinc</keyword>
<protein>
    <recommendedName>
        <fullName evidence="12">Zyxin</fullName>
    </recommendedName>
</protein>
<reference evidence="11" key="1">
    <citation type="journal article" date="1998" name="Science">
        <title>Genome sequence of the nematode C. elegans: a platform for investigating biology.</title>
        <authorList>
            <consortium name="The C. elegans sequencing consortium"/>
        </authorList>
    </citation>
    <scope>NUCLEOTIDE SEQUENCE [LARGE SCALE GENOMIC DNA]</scope>
    <scope>ALTERNATIVE SPLICING</scope>
    <source>
        <strain evidence="11">Bristol N2</strain>
    </source>
</reference>
<reference evidence="10" key="2">
    <citation type="journal article" date="2002" name="Dev. Biol.">
        <title>The GLH proteins, Caenorhabditis elegans P granule components, associate with CSN-5 and KGB-1, proteins necessary for fertility, and with ZYX-1, a predicted cytoskeletal protein.</title>
        <authorList>
            <person name="Smith P."/>
            <person name="Leung-Chiu W.-M."/>
            <person name="Montgomery R."/>
            <person name="Orsborn A."/>
            <person name="Kuznicki K."/>
            <person name="Gressman-Coberly E."/>
            <person name="Mutapcic L."/>
            <person name="Bennett K."/>
        </authorList>
    </citation>
    <scope>INTERACTION WITH GLH-1 AND GLH-3</scope>
</reference>
<reference evidence="10" key="3">
    <citation type="journal article" date="2008" name="Mol. Biol. Cell">
        <title>DYC-1, a protein functionally linked to dystrophin in Caenorhabditis elegans is associated with the dense body, where it interacts with the muscle LIM domain protein ZYX-1.</title>
        <authorList>
            <person name="Lecroisey C."/>
            <person name="Martin E."/>
            <person name="Mariol M.C."/>
            <person name="Granger L."/>
            <person name="Schwab Y."/>
            <person name="Labouesse M."/>
            <person name="Segalat L."/>
            <person name="Gieseler K."/>
        </authorList>
    </citation>
    <scope>SUBCELLULAR LOCATION</scope>
    <scope>TISSUE SPECIFICITY</scope>
    <scope>INTERACTION WITH DYC-1</scope>
</reference>
<reference evidence="10" key="4">
    <citation type="journal article" date="2013" name="Mol. Biol. Cell">
        <title>ZYX-1, the unique zyxin protein of Caenorhabditis elegans, is involved in dystrophin-dependent muscle degeneration.</title>
        <authorList>
            <person name="Lecroisey C."/>
            <person name="Brouilly N."/>
            <person name="Qadota H."/>
            <person name="Mariol M.C."/>
            <person name="Rochette N.C."/>
            <person name="Martin E."/>
            <person name="Benian G.M."/>
            <person name="Segalat L."/>
            <person name="Mounier N."/>
            <person name="Gieseler K."/>
        </authorList>
    </citation>
    <scope>FUNCTION</scope>
    <scope>SUBCELLULAR LOCATION</scope>
    <scope>TISSUE SPECIFICITY</scope>
    <scope>DISRUPTION PHENOTYPE</scope>
</reference>
<reference evidence="10" key="5">
    <citation type="journal article" date="2014" name="Development">
        <title>The conserved LIM domain-containing focal adhesion protein ZYX-1 regulates synapse maintenance in Caenorhabditis elegans.</title>
        <authorList>
            <person name="Luo S."/>
            <person name="Schaefer A.M."/>
            <person name="Dour S."/>
            <person name="Nonet M.L."/>
        </authorList>
    </citation>
    <scope>FUNCTION</scope>
    <scope>SUBCELLULAR LOCATION</scope>
    <scope>TISSUE SPECIFICITY</scope>
    <scope>DEVELOPMENTAL STAGE</scope>
    <scope>DOMAIN</scope>
</reference>
<organism evidence="11">
    <name type="scientific">Caenorhabditis elegans</name>
    <dbReference type="NCBI Taxonomy" id="6239"/>
    <lineage>
        <taxon>Eukaryota</taxon>
        <taxon>Metazoa</taxon>
        <taxon>Ecdysozoa</taxon>
        <taxon>Nematoda</taxon>
        <taxon>Chromadorea</taxon>
        <taxon>Rhabditida</taxon>
        <taxon>Rhabditina</taxon>
        <taxon>Rhabditomorpha</taxon>
        <taxon>Rhabditoidea</taxon>
        <taxon>Rhabditidae</taxon>
        <taxon>Peloderinae</taxon>
        <taxon>Caenorhabditis</taxon>
    </lineage>
</organism>
<proteinExistence type="evidence at protein level"/>
<accession>Q9U3F4</accession>
<accession>H2L2F5</accession>
<accession>H2L2F6</accession>
<accession>H2L2F7</accession>
<accession>Q9U3F5</accession>
<sequence length="603" mass="66774">MGPPPPPPPPPLLPSGEILPSRKWKTEDAPRRNNHPAPAPPKPSRPTVDASALQHAAARLRKTGYNEPVRGDVENLSDGRLDRPHQQLPDGDRTYRANLQQLAQPKTRAEIPSPPTYSNQPRPLGDFHRDPNALSQFQQSREALLSSTSPTSNYSPINKFSSSTLTQYANKSPSPPSFGNSNSEATYVSPYSSKHSYPTNFRSYHKDDDYFNNTATTATTTTSSNSLNENNNSNKYGNKETVLQWSEPYDPSKIRRSQSPIRNAREMIHEYSTTNYVTEVQQPPPPPPDLYQRMTQARTFLQNSLAKQLRDEGLTESQKAANRNQTGALSASSSIPFDASQIVKNSYNGDEVDHLVHQMRTKLNQPADTSPSIVQYPRRQAPDSSRANYSATTSTSFSSSTTRKIMNINICVGCGKEITGDQPGCNAMNQIFHVDCFKCGQCSKTLAGASFYNIDDKPTCEGCYQNSLEKCTACNRAISDKLLRACGGVYHVNCFVCFSCKKSLDGIPFTLDKDNNVHCVPCFHDKFAPRCALCSKPIVPQDGEKESVRVVAMDKSFHVDCYKCEDCGMQLSSKLEGQGCYPIDNHLLCKTCNGNRLRVVSST</sequence>